<feature type="chain" id="PRO_0000329811" description="Polyribonucleotide nucleotidyltransferase">
    <location>
        <begin position="1"/>
        <end position="715"/>
    </location>
</feature>
<feature type="domain" description="KH" evidence="1">
    <location>
        <begin position="554"/>
        <end position="613"/>
    </location>
</feature>
<feature type="domain" description="S1 motif" evidence="1">
    <location>
        <begin position="623"/>
        <end position="691"/>
    </location>
</feature>
<feature type="region of interest" description="Disordered" evidence="2">
    <location>
        <begin position="696"/>
        <end position="715"/>
    </location>
</feature>
<feature type="binding site" evidence="1">
    <location>
        <position position="487"/>
    </location>
    <ligand>
        <name>Mg(2+)</name>
        <dbReference type="ChEBI" id="CHEBI:18420"/>
    </ligand>
</feature>
<feature type="binding site" evidence="1">
    <location>
        <position position="493"/>
    </location>
    <ligand>
        <name>Mg(2+)</name>
        <dbReference type="ChEBI" id="CHEBI:18420"/>
    </ligand>
</feature>
<evidence type="ECO:0000255" key="1">
    <source>
        <dbReference type="HAMAP-Rule" id="MF_01595"/>
    </source>
</evidence>
<evidence type="ECO:0000256" key="2">
    <source>
        <dbReference type="SAM" id="MobiDB-lite"/>
    </source>
</evidence>
<protein>
    <recommendedName>
        <fullName evidence="1">Polyribonucleotide nucleotidyltransferase</fullName>
        <ecNumber evidence="1">2.7.7.8</ecNumber>
    </recommendedName>
    <alternativeName>
        <fullName evidence="1">Polynucleotide phosphorylase</fullName>
        <shortName evidence="1">PNPase</shortName>
    </alternativeName>
</protein>
<dbReference type="EC" id="2.7.7.8" evidence="1"/>
<dbReference type="EMBL" id="CP000301">
    <property type="protein sequence ID" value="ABD86059.1"/>
    <property type="molecule type" value="Genomic_DNA"/>
</dbReference>
<dbReference type="SMR" id="Q21C27"/>
<dbReference type="STRING" id="316056.RPC_0484"/>
<dbReference type="KEGG" id="rpc:RPC_0484"/>
<dbReference type="eggNOG" id="COG1185">
    <property type="taxonomic scope" value="Bacteria"/>
</dbReference>
<dbReference type="HOGENOM" id="CLU_004217_2_2_5"/>
<dbReference type="OrthoDB" id="9804305at2"/>
<dbReference type="GO" id="GO:0005829">
    <property type="term" value="C:cytosol"/>
    <property type="evidence" value="ECO:0007669"/>
    <property type="project" value="TreeGrafter"/>
</dbReference>
<dbReference type="GO" id="GO:0000175">
    <property type="term" value="F:3'-5'-RNA exonuclease activity"/>
    <property type="evidence" value="ECO:0007669"/>
    <property type="project" value="TreeGrafter"/>
</dbReference>
<dbReference type="GO" id="GO:0000287">
    <property type="term" value="F:magnesium ion binding"/>
    <property type="evidence" value="ECO:0007669"/>
    <property type="project" value="UniProtKB-UniRule"/>
</dbReference>
<dbReference type="GO" id="GO:0004654">
    <property type="term" value="F:polyribonucleotide nucleotidyltransferase activity"/>
    <property type="evidence" value="ECO:0007669"/>
    <property type="project" value="UniProtKB-UniRule"/>
</dbReference>
<dbReference type="GO" id="GO:0003723">
    <property type="term" value="F:RNA binding"/>
    <property type="evidence" value="ECO:0007669"/>
    <property type="project" value="UniProtKB-UniRule"/>
</dbReference>
<dbReference type="GO" id="GO:0006402">
    <property type="term" value="P:mRNA catabolic process"/>
    <property type="evidence" value="ECO:0007669"/>
    <property type="project" value="UniProtKB-UniRule"/>
</dbReference>
<dbReference type="GO" id="GO:0006396">
    <property type="term" value="P:RNA processing"/>
    <property type="evidence" value="ECO:0007669"/>
    <property type="project" value="InterPro"/>
</dbReference>
<dbReference type="CDD" id="cd02393">
    <property type="entry name" value="KH-I_PNPase"/>
    <property type="match status" value="1"/>
</dbReference>
<dbReference type="CDD" id="cd11363">
    <property type="entry name" value="RNase_PH_PNPase_1"/>
    <property type="match status" value="1"/>
</dbReference>
<dbReference type="CDD" id="cd11364">
    <property type="entry name" value="RNase_PH_PNPase_2"/>
    <property type="match status" value="1"/>
</dbReference>
<dbReference type="CDD" id="cd04472">
    <property type="entry name" value="S1_PNPase"/>
    <property type="match status" value="1"/>
</dbReference>
<dbReference type="FunFam" id="2.40.50.140:FF:000107">
    <property type="entry name" value="Polyribonucleotide nucleotidyltransferase"/>
    <property type="match status" value="1"/>
</dbReference>
<dbReference type="FunFam" id="3.30.1370.10:FF:000001">
    <property type="entry name" value="Polyribonucleotide nucleotidyltransferase"/>
    <property type="match status" value="1"/>
</dbReference>
<dbReference type="FunFam" id="3.30.230.70:FF:000001">
    <property type="entry name" value="Polyribonucleotide nucleotidyltransferase"/>
    <property type="match status" value="1"/>
</dbReference>
<dbReference type="FunFam" id="3.30.230.70:FF:000002">
    <property type="entry name" value="Polyribonucleotide nucleotidyltransferase"/>
    <property type="match status" value="1"/>
</dbReference>
<dbReference type="Gene3D" id="3.30.230.70">
    <property type="entry name" value="GHMP Kinase, N-terminal domain"/>
    <property type="match status" value="2"/>
</dbReference>
<dbReference type="Gene3D" id="3.30.1370.10">
    <property type="entry name" value="K Homology domain, type 1"/>
    <property type="match status" value="1"/>
</dbReference>
<dbReference type="Gene3D" id="2.40.50.140">
    <property type="entry name" value="Nucleic acid-binding proteins"/>
    <property type="match status" value="1"/>
</dbReference>
<dbReference type="HAMAP" id="MF_01595">
    <property type="entry name" value="PNPase"/>
    <property type="match status" value="1"/>
</dbReference>
<dbReference type="InterPro" id="IPR001247">
    <property type="entry name" value="ExoRNase_PH_dom1"/>
</dbReference>
<dbReference type="InterPro" id="IPR015847">
    <property type="entry name" value="ExoRNase_PH_dom2"/>
</dbReference>
<dbReference type="InterPro" id="IPR036345">
    <property type="entry name" value="ExoRNase_PH_dom2_sf"/>
</dbReference>
<dbReference type="InterPro" id="IPR004087">
    <property type="entry name" value="KH_dom"/>
</dbReference>
<dbReference type="InterPro" id="IPR004088">
    <property type="entry name" value="KH_dom_type_1"/>
</dbReference>
<dbReference type="InterPro" id="IPR036612">
    <property type="entry name" value="KH_dom_type_1_sf"/>
</dbReference>
<dbReference type="InterPro" id="IPR012340">
    <property type="entry name" value="NA-bd_OB-fold"/>
</dbReference>
<dbReference type="InterPro" id="IPR012162">
    <property type="entry name" value="PNPase"/>
</dbReference>
<dbReference type="InterPro" id="IPR027408">
    <property type="entry name" value="PNPase/RNase_PH_dom_sf"/>
</dbReference>
<dbReference type="InterPro" id="IPR015848">
    <property type="entry name" value="PNPase_PH_RNA-bd_bac/org-type"/>
</dbReference>
<dbReference type="InterPro" id="IPR020568">
    <property type="entry name" value="Ribosomal_Su5_D2-typ_SF"/>
</dbReference>
<dbReference type="InterPro" id="IPR003029">
    <property type="entry name" value="S1_domain"/>
</dbReference>
<dbReference type="NCBIfam" id="TIGR03591">
    <property type="entry name" value="polynuc_phos"/>
    <property type="match status" value="1"/>
</dbReference>
<dbReference type="NCBIfam" id="NF008805">
    <property type="entry name" value="PRK11824.1"/>
    <property type="match status" value="1"/>
</dbReference>
<dbReference type="PANTHER" id="PTHR11252">
    <property type="entry name" value="POLYRIBONUCLEOTIDE NUCLEOTIDYLTRANSFERASE"/>
    <property type="match status" value="1"/>
</dbReference>
<dbReference type="PANTHER" id="PTHR11252:SF0">
    <property type="entry name" value="POLYRIBONUCLEOTIDE NUCLEOTIDYLTRANSFERASE 1, MITOCHONDRIAL"/>
    <property type="match status" value="1"/>
</dbReference>
<dbReference type="Pfam" id="PF00013">
    <property type="entry name" value="KH_1"/>
    <property type="match status" value="1"/>
</dbReference>
<dbReference type="Pfam" id="PF03726">
    <property type="entry name" value="PNPase"/>
    <property type="match status" value="1"/>
</dbReference>
<dbReference type="Pfam" id="PF01138">
    <property type="entry name" value="RNase_PH"/>
    <property type="match status" value="2"/>
</dbReference>
<dbReference type="Pfam" id="PF03725">
    <property type="entry name" value="RNase_PH_C"/>
    <property type="match status" value="2"/>
</dbReference>
<dbReference type="Pfam" id="PF00575">
    <property type="entry name" value="S1"/>
    <property type="match status" value="1"/>
</dbReference>
<dbReference type="PIRSF" id="PIRSF005499">
    <property type="entry name" value="PNPase"/>
    <property type="match status" value="1"/>
</dbReference>
<dbReference type="SMART" id="SM00322">
    <property type="entry name" value="KH"/>
    <property type="match status" value="1"/>
</dbReference>
<dbReference type="SMART" id="SM00316">
    <property type="entry name" value="S1"/>
    <property type="match status" value="1"/>
</dbReference>
<dbReference type="SUPFAM" id="SSF54791">
    <property type="entry name" value="Eukaryotic type KH-domain (KH-domain type I)"/>
    <property type="match status" value="1"/>
</dbReference>
<dbReference type="SUPFAM" id="SSF50249">
    <property type="entry name" value="Nucleic acid-binding proteins"/>
    <property type="match status" value="1"/>
</dbReference>
<dbReference type="SUPFAM" id="SSF55666">
    <property type="entry name" value="Ribonuclease PH domain 2-like"/>
    <property type="match status" value="2"/>
</dbReference>
<dbReference type="SUPFAM" id="SSF54211">
    <property type="entry name" value="Ribosomal protein S5 domain 2-like"/>
    <property type="match status" value="2"/>
</dbReference>
<dbReference type="PROSITE" id="PS50084">
    <property type="entry name" value="KH_TYPE_1"/>
    <property type="match status" value="1"/>
</dbReference>
<dbReference type="PROSITE" id="PS50126">
    <property type="entry name" value="S1"/>
    <property type="match status" value="1"/>
</dbReference>
<keyword id="KW-0963">Cytoplasm</keyword>
<keyword id="KW-0460">Magnesium</keyword>
<keyword id="KW-0479">Metal-binding</keyword>
<keyword id="KW-0548">Nucleotidyltransferase</keyword>
<keyword id="KW-0694">RNA-binding</keyword>
<keyword id="KW-0808">Transferase</keyword>
<comment type="function">
    <text evidence="1">Involved in mRNA degradation. Catalyzes the phosphorolysis of single-stranded polyribonucleotides processively in the 3'- to 5'-direction.</text>
</comment>
<comment type="catalytic activity">
    <reaction evidence="1">
        <text>RNA(n+1) + phosphate = RNA(n) + a ribonucleoside 5'-diphosphate</text>
        <dbReference type="Rhea" id="RHEA:22096"/>
        <dbReference type="Rhea" id="RHEA-COMP:14527"/>
        <dbReference type="Rhea" id="RHEA-COMP:17342"/>
        <dbReference type="ChEBI" id="CHEBI:43474"/>
        <dbReference type="ChEBI" id="CHEBI:57930"/>
        <dbReference type="ChEBI" id="CHEBI:140395"/>
        <dbReference type="EC" id="2.7.7.8"/>
    </reaction>
</comment>
<comment type="cofactor">
    <cofactor evidence="1">
        <name>Mg(2+)</name>
        <dbReference type="ChEBI" id="CHEBI:18420"/>
    </cofactor>
</comment>
<comment type="subcellular location">
    <subcellularLocation>
        <location evidence="1">Cytoplasm</location>
    </subcellularLocation>
</comment>
<comment type="similarity">
    <text evidence="1">Belongs to the polyribonucleotide nucleotidyltransferase family.</text>
</comment>
<proteinExistence type="inferred from homology"/>
<gene>
    <name evidence="1" type="primary">pnp</name>
    <name type="ordered locus">RPC_0484</name>
</gene>
<accession>Q21C27</accession>
<name>PNP_RHOPB</name>
<sequence length="715" mass="77529">MFNIHSVEIDWGGRPLKLETGKIARQADGAVVATYGETVVLATVVAAKSAKEGVDFLPLTVDYIEKTYAAGRIPGGYFKREGRPTEKETLVSRLIDRPIRPLFVDGWRNETQVIVTVLSHDMENDPDILALVASSAALTLSGAPFKGPIGAARVGFINDEYVLNPTLDEMVDTQLDLVVAGTADAVLMVESEAKELNEDIMLGAVMFGHRHFQPVVQAIIELAEKAAKEPREVAVVDESVLEKEILGLIEPELRAAYAIPVKQDRYAAVGKAKEKVMAHYFPEGQEPQYDKLRIAGVFKELEAKIVRWNILDTGKRIDGRDSKTVRNIVAQVGVLPRAHGSALFTRGETQALVVTTLGTGEDEQYIDSLSGTYKETFLLHYNFPPYSVGETGRMGGTKRREIGHGKLAWRAIHPVLPPHHEFPYTLRVVSEITESNGSSSMASVCGASLALMDAGVPLKRPTAGIAMGLILEGERFAVLSDILGDEDHLGDMDFKVAGTEQGITSLQMDIKIAGITEEIMKVALGQAKDGRIHILGEMSKALTNARAELGEYAPRIETFKIATDKIREVIGTGGKVIREIVEKTGAKVNIDDDGTVKVASSDGESIKAAIKWIKSIASDPELNAIYDGTVVKVMEFGAFVNFFGAKDGLVHISQLAAGRVQKTSDVVKEGDKVKVKLLGFDDRGKTRLSMKVVDQETGEDLEAKQKAAEGATAAE</sequence>
<organism>
    <name type="scientific">Rhodopseudomonas palustris (strain BisB18)</name>
    <dbReference type="NCBI Taxonomy" id="316056"/>
    <lineage>
        <taxon>Bacteria</taxon>
        <taxon>Pseudomonadati</taxon>
        <taxon>Pseudomonadota</taxon>
        <taxon>Alphaproteobacteria</taxon>
        <taxon>Hyphomicrobiales</taxon>
        <taxon>Nitrobacteraceae</taxon>
        <taxon>Rhodopseudomonas</taxon>
    </lineage>
</organism>
<reference key="1">
    <citation type="submission" date="2006-03" db="EMBL/GenBank/DDBJ databases">
        <title>Complete sequence of Rhodopseudomonas palustris BisB18.</title>
        <authorList>
            <consortium name="US DOE Joint Genome Institute"/>
            <person name="Copeland A."/>
            <person name="Lucas S."/>
            <person name="Lapidus A."/>
            <person name="Barry K."/>
            <person name="Detter J.C."/>
            <person name="Glavina del Rio T."/>
            <person name="Hammon N."/>
            <person name="Israni S."/>
            <person name="Dalin E."/>
            <person name="Tice H."/>
            <person name="Pitluck S."/>
            <person name="Chain P."/>
            <person name="Malfatti S."/>
            <person name="Shin M."/>
            <person name="Vergez L."/>
            <person name="Schmutz J."/>
            <person name="Larimer F."/>
            <person name="Land M."/>
            <person name="Hauser L."/>
            <person name="Pelletier D.A."/>
            <person name="Kyrpides N."/>
            <person name="Anderson I."/>
            <person name="Oda Y."/>
            <person name="Harwood C.S."/>
            <person name="Richardson P."/>
        </authorList>
    </citation>
    <scope>NUCLEOTIDE SEQUENCE [LARGE SCALE GENOMIC DNA]</scope>
    <source>
        <strain>BisB18</strain>
    </source>
</reference>